<gene>
    <name type="ordered locus">Ssed_3490</name>
</gene>
<evidence type="ECO:0000255" key="1">
    <source>
        <dbReference type="HAMAP-Rule" id="MF_00659"/>
    </source>
</evidence>
<keyword id="KW-1185">Reference proteome</keyword>
<accession>A8FZ21</accession>
<feature type="chain" id="PRO_1000082831" description="UPF0250 protein Ssed_3490">
    <location>
        <begin position="1"/>
        <end position="88"/>
    </location>
</feature>
<dbReference type="EMBL" id="CP000821">
    <property type="protein sequence ID" value="ABV38094.1"/>
    <property type="molecule type" value="Genomic_DNA"/>
</dbReference>
<dbReference type="RefSeq" id="WP_012143824.1">
    <property type="nucleotide sequence ID" value="NC_009831.1"/>
</dbReference>
<dbReference type="SMR" id="A8FZ21"/>
<dbReference type="STRING" id="425104.Ssed_3490"/>
<dbReference type="KEGG" id="sse:Ssed_3490"/>
<dbReference type="eggNOG" id="COG2921">
    <property type="taxonomic scope" value="Bacteria"/>
</dbReference>
<dbReference type="HOGENOM" id="CLU_161438_2_1_6"/>
<dbReference type="OrthoDB" id="9793424at2"/>
<dbReference type="Proteomes" id="UP000002015">
    <property type="component" value="Chromosome"/>
</dbReference>
<dbReference type="GO" id="GO:0005829">
    <property type="term" value="C:cytosol"/>
    <property type="evidence" value="ECO:0007669"/>
    <property type="project" value="TreeGrafter"/>
</dbReference>
<dbReference type="Gene3D" id="3.30.70.260">
    <property type="match status" value="1"/>
</dbReference>
<dbReference type="HAMAP" id="MF_00659">
    <property type="entry name" value="UPF0250"/>
    <property type="match status" value="1"/>
</dbReference>
<dbReference type="InterPro" id="IPR007454">
    <property type="entry name" value="UPF0250_YbeD-like"/>
</dbReference>
<dbReference type="InterPro" id="IPR027471">
    <property type="entry name" value="YbeD-like_sf"/>
</dbReference>
<dbReference type="NCBIfam" id="NF003447">
    <property type="entry name" value="PRK04998.1"/>
    <property type="match status" value="1"/>
</dbReference>
<dbReference type="PANTHER" id="PTHR38036">
    <property type="entry name" value="UPF0250 PROTEIN YBED"/>
    <property type="match status" value="1"/>
</dbReference>
<dbReference type="PANTHER" id="PTHR38036:SF1">
    <property type="entry name" value="UPF0250 PROTEIN YBED"/>
    <property type="match status" value="1"/>
</dbReference>
<dbReference type="Pfam" id="PF04359">
    <property type="entry name" value="DUF493"/>
    <property type="match status" value="1"/>
</dbReference>
<dbReference type="SUPFAM" id="SSF117991">
    <property type="entry name" value="YbeD/HP0495-like"/>
    <property type="match status" value="1"/>
</dbReference>
<reference key="1">
    <citation type="submission" date="2007-08" db="EMBL/GenBank/DDBJ databases">
        <title>Complete sequence of Shewanella sediminis HAW-EB3.</title>
        <authorList>
            <consortium name="US DOE Joint Genome Institute"/>
            <person name="Copeland A."/>
            <person name="Lucas S."/>
            <person name="Lapidus A."/>
            <person name="Barry K."/>
            <person name="Glavina del Rio T."/>
            <person name="Dalin E."/>
            <person name="Tice H."/>
            <person name="Pitluck S."/>
            <person name="Chertkov O."/>
            <person name="Brettin T."/>
            <person name="Bruce D."/>
            <person name="Detter J.C."/>
            <person name="Han C."/>
            <person name="Schmutz J."/>
            <person name="Larimer F."/>
            <person name="Land M."/>
            <person name="Hauser L."/>
            <person name="Kyrpides N."/>
            <person name="Kim E."/>
            <person name="Zhao J.-S."/>
            <person name="Richardson P."/>
        </authorList>
    </citation>
    <scope>NUCLEOTIDE SEQUENCE [LARGE SCALE GENOMIC DNA]</scope>
    <source>
        <strain>HAW-EB3</strain>
    </source>
</reference>
<organism>
    <name type="scientific">Shewanella sediminis (strain HAW-EB3)</name>
    <dbReference type="NCBI Taxonomy" id="425104"/>
    <lineage>
        <taxon>Bacteria</taxon>
        <taxon>Pseudomonadati</taxon>
        <taxon>Pseudomonadota</taxon>
        <taxon>Gammaproteobacteria</taxon>
        <taxon>Alteromonadales</taxon>
        <taxon>Shewanellaceae</taxon>
        <taxon>Shewanella</taxon>
    </lineage>
</organism>
<comment type="similarity">
    <text evidence="1">Belongs to the UPF0250 family.</text>
</comment>
<proteinExistence type="inferred from homology"/>
<name>Y3490_SHESH</name>
<sequence>MLDTKFDELMEFPCAFPYKVVGDASSTLADRVVEVVQRHVPGDYAPTSKTSSKGTYNSITIRVTVQSKEQVETLYTELAAIEGVKRVL</sequence>
<protein>
    <recommendedName>
        <fullName evidence="1">UPF0250 protein Ssed_3490</fullName>
    </recommendedName>
</protein>